<keyword id="KW-0119">Carbohydrate metabolism</keyword>
<keyword id="KW-0136">Cellulose degradation</keyword>
<keyword id="KW-0325">Glycoprotein</keyword>
<keyword id="KW-0326">Glycosidase</keyword>
<keyword id="KW-0378">Hydrolase</keyword>
<keyword id="KW-0624">Polysaccharide degradation</keyword>
<keyword id="KW-1185">Reference proteome</keyword>
<keyword id="KW-0964">Secreted</keyword>
<keyword id="KW-0732">Signal</keyword>
<dbReference type="EC" id="3.2.1.4"/>
<dbReference type="EMBL" id="DS027053">
    <property type="protein sequence ID" value="EAW10967.1"/>
    <property type="molecule type" value="Genomic_DNA"/>
</dbReference>
<dbReference type="RefSeq" id="XP_001272393.1">
    <property type="nucleotide sequence ID" value="XM_001272392.1"/>
</dbReference>
<dbReference type="SMR" id="A1CG87"/>
<dbReference type="STRING" id="344612.A1CG87"/>
<dbReference type="GlyCosmos" id="A1CG87">
    <property type="glycosylation" value="5 sites, No reported glycans"/>
</dbReference>
<dbReference type="EnsemblFungi" id="EAW10967">
    <property type="protein sequence ID" value="EAW10967"/>
    <property type="gene ID" value="ACLA_066030"/>
</dbReference>
<dbReference type="GeneID" id="4704573"/>
<dbReference type="KEGG" id="act:ACLA_066030"/>
<dbReference type="VEuPathDB" id="FungiDB:ACLA_066030"/>
<dbReference type="eggNOG" id="ENOG502SJT6">
    <property type="taxonomic scope" value="Eukaryota"/>
</dbReference>
<dbReference type="HOGENOM" id="CLU_020817_0_1_1"/>
<dbReference type="OMA" id="ALCPDKK"/>
<dbReference type="OrthoDB" id="412382at2759"/>
<dbReference type="Proteomes" id="UP000006701">
    <property type="component" value="Unassembled WGS sequence"/>
</dbReference>
<dbReference type="GO" id="GO:0005576">
    <property type="term" value="C:extracellular region"/>
    <property type="evidence" value="ECO:0007669"/>
    <property type="project" value="UniProtKB-SubCell"/>
</dbReference>
<dbReference type="GO" id="GO:0008810">
    <property type="term" value="F:cellulase activity"/>
    <property type="evidence" value="ECO:0007669"/>
    <property type="project" value="UniProtKB-EC"/>
</dbReference>
<dbReference type="GO" id="GO:0030245">
    <property type="term" value="P:cellulose catabolic process"/>
    <property type="evidence" value="ECO:0007669"/>
    <property type="project" value="UniProtKB-KW"/>
</dbReference>
<dbReference type="CDD" id="cd07999">
    <property type="entry name" value="GH7_CBH_EG"/>
    <property type="match status" value="1"/>
</dbReference>
<dbReference type="Gene3D" id="2.70.100.10">
    <property type="entry name" value="Glycoside hydrolase, family 7, domain"/>
    <property type="match status" value="1"/>
</dbReference>
<dbReference type="InterPro" id="IPR013320">
    <property type="entry name" value="ConA-like_dom_sf"/>
</dbReference>
<dbReference type="InterPro" id="IPR001722">
    <property type="entry name" value="Glyco_hydro_7"/>
</dbReference>
<dbReference type="InterPro" id="IPR037019">
    <property type="entry name" value="Glyco_hydro_7_sf"/>
</dbReference>
<dbReference type="PANTHER" id="PTHR33753">
    <property type="entry name" value="1,4-BETA-D-GLUCAN CELLOBIOHYDROLASE B"/>
    <property type="match status" value="1"/>
</dbReference>
<dbReference type="PANTHER" id="PTHR33753:SF1">
    <property type="entry name" value="ENDO-BETA-1,4-GLUCANASE CELB"/>
    <property type="match status" value="1"/>
</dbReference>
<dbReference type="Pfam" id="PF00840">
    <property type="entry name" value="Glyco_hydro_7"/>
    <property type="match status" value="1"/>
</dbReference>
<dbReference type="PRINTS" id="PR00734">
    <property type="entry name" value="GLHYDRLASE7"/>
</dbReference>
<dbReference type="SUPFAM" id="SSF49899">
    <property type="entry name" value="Concanavalin A-like lectins/glucanases"/>
    <property type="match status" value="1"/>
</dbReference>
<sequence length="418" mass="44827">MVRTFAVTALALLPLVAAQQIGSTKEVHPQLTTYKCTSQGGCVKQNTSIVLDSGSHWIHAKGGEVSCTTSSGLDPALCPDKETCAENCVVEGITDYSQYGVQTRGDAMLLREYIKQNNQTKAPSPRVYLLDEDGENYSMLRLLNQEFTFDVDVSKLPCGMNGALYFSEMSASGGRSALNPAGAAYGTGYCDAQCYTNAWINGEANTAKAGLCCQEMDIWEANARANAFTPHPCNSTGLLGCAGDECNSVCDKAGCGFNPYALGARDYYGTAMTVDTTKPFTVVTQFLTADNSTTGALREIRRLYVQAGQVIQNAVVKVDGRTVNSITEPYCASQGVFEGLGGLRRMGEALGRGMVLSMSIWNDAGGFMHWLDSGNSGPCSSTEGDPSLIENKYPDTAVTFSKIRWGDLGTTFATRRLH</sequence>
<feature type="signal peptide" evidence="2">
    <location>
        <begin position="1"/>
        <end position="18"/>
    </location>
</feature>
<feature type="chain" id="PRO_0000395153" description="Probable endo-beta-1,4-glucanase celB">
    <location>
        <begin position="19"/>
        <end position="418"/>
    </location>
</feature>
<feature type="active site" description="Nucleophile" evidence="1">
    <location>
        <position position="215"/>
    </location>
</feature>
<feature type="active site" description="Proton donor" evidence="1">
    <location>
        <position position="220"/>
    </location>
</feature>
<feature type="glycosylation site" description="N-linked (GlcNAc...) asparagine" evidence="2">
    <location>
        <position position="46"/>
    </location>
</feature>
<feature type="glycosylation site" description="N-linked (GlcNAc...) asparagine" evidence="2">
    <location>
        <position position="118"/>
    </location>
</feature>
<feature type="glycosylation site" description="N-linked (GlcNAc...) asparagine" evidence="2">
    <location>
        <position position="136"/>
    </location>
</feature>
<feature type="glycosylation site" description="N-linked (GlcNAc...) asparagine" evidence="2">
    <location>
        <position position="234"/>
    </location>
</feature>
<feature type="glycosylation site" description="N-linked (GlcNAc...) asparagine" evidence="2">
    <location>
        <position position="291"/>
    </location>
</feature>
<name>CELB_ASPCL</name>
<accession>A1CG87</accession>
<proteinExistence type="inferred from homology"/>
<protein>
    <recommendedName>
        <fullName>Probable endo-beta-1,4-glucanase celB</fullName>
        <shortName>Endoglucanase celB</shortName>
        <ecNumber>3.2.1.4</ecNumber>
    </recommendedName>
    <alternativeName>
        <fullName>Carboxymethylcellulase celB</fullName>
    </alternativeName>
    <alternativeName>
        <fullName>Cellulase B</fullName>
    </alternativeName>
</protein>
<comment type="function">
    <text evidence="1">Has endoglucanase activity on substrates containing beta-1,4 glycosidic bonds, like in carboxymethylcellulose (CMC), hydroxyethylcellulose (HEC) and beta-glucan. Involved in the degradation of complex natural cellulosic substrates (By similarity).</text>
</comment>
<comment type="catalytic activity">
    <reaction>
        <text>Endohydrolysis of (1-&gt;4)-beta-D-glucosidic linkages in cellulose, lichenin and cereal beta-D-glucans.</text>
        <dbReference type="EC" id="3.2.1.4"/>
    </reaction>
</comment>
<comment type="subcellular location">
    <subcellularLocation>
        <location evidence="1">Secreted</location>
    </subcellularLocation>
</comment>
<comment type="similarity">
    <text evidence="3">Belongs to the glycosyl hydrolase 7 (cellulase C) family.</text>
</comment>
<reference key="1">
    <citation type="journal article" date="2008" name="PLoS Genet.">
        <title>Genomic islands in the pathogenic filamentous fungus Aspergillus fumigatus.</title>
        <authorList>
            <person name="Fedorova N.D."/>
            <person name="Khaldi N."/>
            <person name="Joardar V.S."/>
            <person name="Maiti R."/>
            <person name="Amedeo P."/>
            <person name="Anderson M.J."/>
            <person name="Crabtree J."/>
            <person name="Silva J.C."/>
            <person name="Badger J.H."/>
            <person name="Albarraq A."/>
            <person name="Angiuoli S."/>
            <person name="Bussey H."/>
            <person name="Bowyer P."/>
            <person name="Cotty P.J."/>
            <person name="Dyer P.S."/>
            <person name="Egan A."/>
            <person name="Galens K."/>
            <person name="Fraser-Liggett C.M."/>
            <person name="Haas B.J."/>
            <person name="Inman J.M."/>
            <person name="Kent R."/>
            <person name="Lemieux S."/>
            <person name="Malavazi I."/>
            <person name="Orvis J."/>
            <person name="Roemer T."/>
            <person name="Ronning C.M."/>
            <person name="Sundaram J.P."/>
            <person name="Sutton G."/>
            <person name="Turner G."/>
            <person name="Venter J.C."/>
            <person name="White O.R."/>
            <person name="Whitty B.R."/>
            <person name="Youngman P."/>
            <person name="Wolfe K.H."/>
            <person name="Goldman G.H."/>
            <person name="Wortman J.R."/>
            <person name="Jiang B."/>
            <person name="Denning D.W."/>
            <person name="Nierman W.C."/>
        </authorList>
    </citation>
    <scope>NUCLEOTIDE SEQUENCE [LARGE SCALE GENOMIC DNA]</scope>
    <source>
        <strain>ATCC 1007 / CBS 513.65 / DSM 816 / NCTC 3887 / NRRL 1 / QM 1276 / 107</strain>
    </source>
</reference>
<gene>
    <name type="primary">celB</name>
    <name type="ORF">ACLA_066030</name>
</gene>
<organism>
    <name type="scientific">Aspergillus clavatus (strain ATCC 1007 / CBS 513.65 / DSM 816 / NCTC 3887 / NRRL 1 / QM 1276 / 107)</name>
    <dbReference type="NCBI Taxonomy" id="344612"/>
    <lineage>
        <taxon>Eukaryota</taxon>
        <taxon>Fungi</taxon>
        <taxon>Dikarya</taxon>
        <taxon>Ascomycota</taxon>
        <taxon>Pezizomycotina</taxon>
        <taxon>Eurotiomycetes</taxon>
        <taxon>Eurotiomycetidae</taxon>
        <taxon>Eurotiales</taxon>
        <taxon>Aspergillaceae</taxon>
        <taxon>Aspergillus</taxon>
        <taxon>Aspergillus subgen. Fumigati</taxon>
    </lineage>
</organism>
<evidence type="ECO:0000250" key="1"/>
<evidence type="ECO:0000255" key="2"/>
<evidence type="ECO:0000305" key="3"/>